<keyword id="KW-0238">DNA-binding</keyword>
<keyword id="KW-1017">Isopeptide bond</keyword>
<keyword id="KW-0479">Metal-binding</keyword>
<keyword id="KW-0539">Nucleus</keyword>
<keyword id="KW-1267">Proteomics identification</keyword>
<keyword id="KW-1185">Reference proteome</keyword>
<keyword id="KW-0677">Repeat</keyword>
<keyword id="KW-0804">Transcription</keyword>
<keyword id="KW-0805">Transcription regulation</keyword>
<keyword id="KW-0832">Ubl conjugation</keyword>
<keyword id="KW-0862">Zinc</keyword>
<keyword id="KW-0863">Zinc-finger</keyword>
<organism>
    <name type="scientific">Homo sapiens</name>
    <name type="common">Human</name>
    <dbReference type="NCBI Taxonomy" id="9606"/>
    <lineage>
        <taxon>Eukaryota</taxon>
        <taxon>Metazoa</taxon>
        <taxon>Chordata</taxon>
        <taxon>Craniata</taxon>
        <taxon>Vertebrata</taxon>
        <taxon>Euteleostomi</taxon>
        <taxon>Mammalia</taxon>
        <taxon>Eutheria</taxon>
        <taxon>Euarchontoglires</taxon>
        <taxon>Primates</taxon>
        <taxon>Haplorrhini</taxon>
        <taxon>Catarrhini</taxon>
        <taxon>Hominidae</taxon>
        <taxon>Homo</taxon>
    </lineage>
</organism>
<accession>Q02386</accession>
<accession>P17016</accession>
<accession>P78472</accession>
<accession>Q9P1U9</accession>
<proteinExistence type="evidence at protein level"/>
<gene>
    <name type="primary">ZNF45</name>
    <name type="synonym">KOX5</name>
    <name type="synonym">ZNF13</name>
</gene>
<comment type="function">
    <text>May be involved in transcriptional regulation.</text>
</comment>
<comment type="subcellular location">
    <subcellularLocation>
        <location>Nucleus</location>
    </subcellularLocation>
</comment>
<comment type="similarity">
    <text evidence="5">Belongs to the krueppel C2H2-type zinc-finger protein family.</text>
</comment>
<reference key="1">
    <citation type="journal article" date="1996" name="Cytogenet. Cell Genet.">
        <title>Complete coding sequence, exon/intron arrangement and chromosome location of ZNF45, a KRAB-domain-containing gene.</title>
        <authorList>
            <person name="Constantinou-Deltas C.D."/>
            <person name="Bashiardes E."/>
            <person name="Patsalis P.C."/>
            <person name="Hadjimarcou M."/>
            <person name="Kroisel P.M."/>
            <person name="Ioannou P.A."/>
            <person name="Roses A.D."/>
            <person name="Lee J.E."/>
        </authorList>
    </citation>
    <scope>NUCLEOTIDE SEQUENCE [MRNA]</scope>
</reference>
<reference key="2">
    <citation type="journal article" date="2004" name="Nature">
        <title>The DNA sequence and biology of human chromosome 19.</title>
        <authorList>
            <person name="Grimwood J."/>
            <person name="Gordon L.A."/>
            <person name="Olsen A.S."/>
            <person name="Terry A."/>
            <person name="Schmutz J."/>
            <person name="Lamerdin J.E."/>
            <person name="Hellsten U."/>
            <person name="Goodstein D."/>
            <person name="Couronne O."/>
            <person name="Tran-Gyamfi M."/>
            <person name="Aerts A."/>
            <person name="Altherr M."/>
            <person name="Ashworth L."/>
            <person name="Bajorek E."/>
            <person name="Black S."/>
            <person name="Branscomb E."/>
            <person name="Caenepeel S."/>
            <person name="Carrano A.V."/>
            <person name="Caoile C."/>
            <person name="Chan Y.M."/>
            <person name="Christensen M."/>
            <person name="Cleland C.A."/>
            <person name="Copeland A."/>
            <person name="Dalin E."/>
            <person name="Dehal P."/>
            <person name="Denys M."/>
            <person name="Detter J.C."/>
            <person name="Escobar J."/>
            <person name="Flowers D."/>
            <person name="Fotopulos D."/>
            <person name="Garcia C."/>
            <person name="Georgescu A.M."/>
            <person name="Glavina T."/>
            <person name="Gomez M."/>
            <person name="Gonzales E."/>
            <person name="Groza M."/>
            <person name="Hammon N."/>
            <person name="Hawkins T."/>
            <person name="Haydu L."/>
            <person name="Ho I."/>
            <person name="Huang W."/>
            <person name="Israni S."/>
            <person name="Jett J."/>
            <person name="Kadner K."/>
            <person name="Kimball H."/>
            <person name="Kobayashi A."/>
            <person name="Larionov V."/>
            <person name="Leem S.-H."/>
            <person name="Lopez F."/>
            <person name="Lou Y."/>
            <person name="Lowry S."/>
            <person name="Malfatti S."/>
            <person name="Martinez D."/>
            <person name="McCready P.M."/>
            <person name="Medina C."/>
            <person name="Morgan J."/>
            <person name="Nelson K."/>
            <person name="Nolan M."/>
            <person name="Ovcharenko I."/>
            <person name="Pitluck S."/>
            <person name="Pollard M."/>
            <person name="Popkie A.P."/>
            <person name="Predki P."/>
            <person name="Quan G."/>
            <person name="Ramirez L."/>
            <person name="Rash S."/>
            <person name="Retterer J."/>
            <person name="Rodriguez A."/>
            <person name="Rogers S."/>
            <person name="Salamov A."/>
            <person name="Salazar A."/>
            <person name="She X."/>
            <person name="Smith D."/>
            <person name="Slezak T."/>
            <person name="Solovyev V."/>
            <person name="Thayer N."/>
            <person name="Tice H."/>
            <person name="Tsai M."/>
            <person name="Ustaszewska A."/>
            <person name="Vo N."/>
            <person name="Wagner M."/>
            <person name="Wheeler J."/>
            <person name="Wu K."/>
            <person name="Xie G."/>
            <person name="Yang J."/>
            <person name="Dubchak I."/>
            <person name="Furey T.S."/>
            <person name="DeJong P."/>
            <person name="Dickson M."/>
            <person name="Gordon D."/>
            <person name="Eichler E.E."/>
            <person name="Pennacchio L.A."/>
            <person name="Richardson P."/>
            <person name="Stubbs L."/>
            <person name="Rokhsar D.S."/>
            <person name="Myers R.M."/>
            <person name="Rubin E.M."/>
            <person name="Lucas S.M."/>
        </authorList>
    </citation>
    <scope>NUCLEOTIDE SEQUENCE [LARGE SCALE GENOMIC DNA]</scope>
    <scope>VARIANTS LYS-255; ALA-299; ARG-303 AND LYS-504</scope>
</reference>
<reference key="3">
    <citation type="journal article" date="2004" name="Genome Res.">
        <title>The status, quality, and expansion of the NIH full-length cDNA project: the Mammalian Gene Collection (MGC).</title>
        <authorList>
            <consortium name="The MGC Project Team"/>
        </authorList>
    </citation>
    <scope>NUCLEOTIDE SEQUENCE [LARGE SCALE MRNA]</scope>
    <source>
        <tissue>Skin</tissue>
    </source>
</reference>
<reference key="4">
    <citation type="journal article" date="1992" name="Genomics">
        <title>The identification and characterization of KRAB-domain-containing zinc finger proteins.</title>
        <authorList>
            <person name="Constantinou-Deltas C.D."/>
            <person name="Gilbert J."/>
            <person name="Bartlett R.J."/>
            <person name="Herbstreith M."/>
            <person name="Roses A.D."/>
            <person name="Lee J.E."/>
        </authorList>
    </citation>
    <scope>NUCLEOTIDE SEQUENCE [MRNA] OF 1-400</scope>
</reference>
<reference key="5">
    <citation type="journal article" date="1990" name="New Biol.">
        <title>Multiple genes encoding zinc finger domains are expressed in human T cells.</title>
        <authorList>
            <person name="Thiesen H.-J."/>
        </authorList>
    </citation>
    <scope>NUCLEOTIDE SEQUENCE [MRNA] OF 416-471</scope>
    <source>
        <tissue>Lymphoid tissue</tissue>
    </source>
</reference>
<reference key="6">
    <citation type="journal article" date="2017" name="Nat. Struct. Mol. Biol.">
        <title>Site-specific mapping of the human SUMO proteome reveals co-modification with phosphorylation.</title>
        <authorList>
            <person name="Hendriks I.A."/>
            <person name="Lyon D."/>
            <person name="Young C."/>
            <person name="Jensen L.J."/>
            <person name="Vertegaal A.C."/>
            <person name="Nielsen M.L."/>
        </authorList>
    </citation>
    <scope>SUMOYLATION [LARGE SCALE ANALYSIS] AT LYS-117 AND LYS-249</scope>
    <scope>IDENTIFICATION BY MASS SPECTROMETRY [LARGE SCALE ANALYSIS]</scope>
</reference>
<feature type="chain" id="PRO_0000047378" description="Zinc finger protein 45">
    <location>
        <begin position="1"/>
        <end position="682"/>
    </location>
</feature>
<feature type="domain" description="KRAB" evidence="2">
    <location>
        <begin position="8"/>
        <end position="78"/>
    </location>
</feature>
<feature type="zinc finger region" description="C2H2-type 1; degenerate" evidence="1">
    <location>
        <begin position="164"/>
        <end position="186"/>
    </location>
</feature>
<feature type="zinc finger region" description="C2H2-type 2" evidence="1">
    <location>
        <begin position="192"/>
        <end position="214"/>
    </location>
</feature>
<feature type="zinc finger region" description="C2H2-type 3" evidence="1">
    <location>
        <begin position="220"/>
        <end position="247"/>
    </location>
</feature>
<feature type="zinc finger region" description="C2H2-type 4" evidence="1">
    <location>
        <begin position="248"/>
        <end position="275"/>
    </location>
</feature>
<feature type="zinc finger region" description="C2H2-type 5" evidence="1">
    <location>
        <begin position="276"/>
        <end position="298"/>
    </location>
</feature>
<feature type="zinc finger region" description="C2H2-type 6" evidence="1">
    <location>
        <begin position="304"/>
        <end position="326"/>
    </location>
</feature>
<feature type="zinc finger region" description="C2H2-type 7" evidence="1">
    <location>
        <begin position="332"/>
        <end position="354"/>
    </location>
</feature>
<feature type="zinc finger region" description="C2H2-type 8" evidence="1">
    <location>
        <begin position="360"/>
        <end position="382"/>
    </location>
</feature>
<feature type="zinc finger region" description="C2H2-type 9" evidence="1">
    <location>
        <begin position="388"/>
        <end position="410"/>
    </location>
</feature>
<feature type="zinc finger region" description="C2H2-type 10" evidence="1">
    <location>
        <begin position="416"/>
        <end position="438"/>
    </location>
</feature>
<feature type="zinc finger region" description="C2H2-type 11" evidence="1">
    <location>
        <begin position="444"/>
        <end position="466"/>
    </location>
</feature>
<feature type="zinc finger region" description="C2H2-type 12" evidence="1">
    <location>
        <begin position="472"/>
        <end position="494"/>
    </location>
</feature>
<feature type="zinc finger region" description="C2H2-type 13" evidence="1">
    <location>
        <begin position="500"/>
        <end position="522"/>
    </location>
</feature>
<feature type="zinc finger region" description="C2H2-type 14" evidence="1">
    <location>
        <begin position="528"/>
        <end position="550"/>
    </location>
</feature>
<feature type="zinc finger region" description="C2H2-type 15" evidence="1">
    <location>
        <begin position="556"/>
        <end position="578"/>
    </location>
</feature>
<feature type="zinc finger region" description="C2H2-type 16" evidence="1">
    <location>
        <begin position="584"/>
        <end position="606"/>
    </location>
</feature>
<feature type="zinc finger region" description="C2H2-type 17" evidence="1">
    <location>
        <begin position="612"/>
        <end position="634"/>
    </location>
</feature>
<feature type="zinc finger region" description="C2H2-type 18" evidence="1">
    <location>
        <begin position="640"/>
        <end position="662"/>
    </location>
</feature>
<feature type="region of interest" description="Disordered" evidence="3">
    <location>
        <begin position="662"/>
        <end position="682"/>
    </location>
</feature>
<feature type="cross-link" description="Glycyl lysine isopeptide (Lys-Gly) (interchain with G-Cter in SUMO2)" evidence="6">
    <location>
        <position position="117"/>
    </location>
</feature>
<feature type="cross-link" description="Glycyl lysine isopeptide (Lys-Gly) (interchain with G-Cter in SUMO2)" evidence="6">
    <location>
        <position position="249"/>
    </location>
</feature>
<feature type="sequence variant" id="VAR_012019" description="In dbSNP:rs1047452.">
    <original>A</original>
    <variation>T</variation>
    <location>
        <position position="187"/>
    </location>
</feature>
<feature type="sequence variant" id="VAR_012020" description="In dbSNP:rs399098." evidence="4">
    <original>R</original>
    <variation>K</variation>
    <location>
        <position position="255"/>
    </location>
</feature>
<feature type="sequence variant" id="VAR_012021" description="In dbSNP:rs388706." evidence="4">
    <original>T</original>
    <variation>A</variation>
    <location>
        <position position="299"/>
    </location>
</feature>
<feature type="sequence variant" id="VAR_012022" description="In dbSNP:rs388685." evidence="4">
    <original>P</original>
    <variation>R</variation>
    <location>
        <position position="303"/>
    </location>
</feature>
<feature type="sequence variant" id="VAR_012023" description="In dbSNP:rs407731." evidence="4">
    <original>R</original>
    <variation>K</variation>
    <location>
        <position position="504"/>
    </location>
</feature>
<feature type="sequence conflict" description="In Ref. 5; CAA36562." evidence="5" ref="5">
    <original>Q</original>
    <variation>R</variation>
    <location>
        <position position="455"/>
    </location>
</feature>
<evidence type="ECO:0000255" key="1">
    <source>
        <dbReference type="PROSITE-ProRule" id="PRU00042"/>
    </source>
</evidence>
<evidence type="ECO:0000255" key="2">
    <source>
        <dbReference type="PROSITE-ProRule" id="PRU00119"/>
    </source>
</evidence>
<evidence type="ECO:0000256" key="3">
    <source>
        <dbReference type="SAM" id="MobiDB-lite"/>
    </source>
</evidence>
<evidence type="ECO:0000269" key="4">
    <source>
    </source>
</evidence>
<evidence type="ECO:0000305" key="5"/>
<evidence type="ECO:0007744" key="6">
    <source>
    </source>
</evidence>
<protein>
    <recommendedName>
        <fullName>Zinc finger protein 45</fullName>
    </recommendedName>
    <alternativeName>
        <fullName>BRC1744</fullName>
    </alternativeName>
    <alternativeName>
        <fullName>Zinc finger protein 13</fullName>
    </alternativeName>
    <alternativeName>
        <fullName>Zinc finger protein KOX5</fullName>
    </alternativeName>
</protein>
<sequence length="682" mass="78242">MTKSKEAVTFKDVAVVFSEEELQLLDLAQRKLYRDVMLENFRNVVSVGHQSTPDGLPQLEREEKLWMMKMATQRDNSSGAKNLKEMETLQEVGLRYLPHEELFCSQIWQQITRELIKYQDSVVNIQRTGCQLEKRDDLHYKDEGFSNQSSHLQVHRVHTGEKPYKGEHCVKSFSWSSHLQINQRAHAGEKPYKCEKCDNAFRRFSSLQAHQRVHSRAKSYTNDASYRSFSQRSHLPHHQRVPTGENPYKYEECGRNVGKSSHCQAPLIVHTGEKPYKCEECGVGFSQRSYLQVHLKVHTGKKPYKCEECGKSFSWRSRLQAHERIHTGEKPYKCNACGKSFSYSSHLNIHCRIHTGEKPYKCEECGKGFSVGSHLQAHQISHTGEKPYKCEECGKGFCRASNLLDHQRGHTGEKPYQCDACGKGFSRSSDFNIHFRVHTGEKPYKCEECGKGFSQASNLLAHQRGHTGEKPYKCGTCGKGFSRSSDLNVHCRIHTGEKPYKCERCGKAFSQFSSLQVHQRVHTGEKPYQCAECGKGFSVGSQLQAHQRCHTGEKPYQCEECGKGFCRASNFLAHRGVHTGEKPYRCDVCGKRFRQRSYLQAHQRVHTGERPYKCEECGKVFSWSSYLQAHQRVHTGEKPYKCEECGKGFSWSSSLIIHQRVHADDEGDKDFPSSEDSHRKTR</sequence>
<dbReference type="EMBL" id="L75847">
    <property type="protein sequence ID" value="AAB05653.1"/>
    <property type="molecule type" value="mRNA"/>
</dbReference>
<dbReference type="EMBL" id="AC035150">
    <property type="protein sequence ID" value="AAF63030.1"/>
    <property type="molecule type" value="Genomic_DNA"/>
</dbReference>
<dbReference type="EMBL" id="BC037575">
    <property type="protein sequence ID" value="AAH37575.1"/>
    <property type="molecule type" value="mRNA"/>
</dbReference>
<dbReference type="EMBL" id="M67509">
    <property type="protein sequence ID" value="AAA36133.1"/>
    <property type="molecule type" value="mRNA"/>
</dbReference>
<dbReference type="EMBL" id="M67509">
    <property type="protein sequence ID" value="AAA36134.1"/>
    <property type="molecule type" value="mRNA"/>
</dbReference>
<dbReference type="EMBL" id="X52336">
    <property type="protein sequence ID" value="CAA36562.1"/>
    <property type="molecule type" value="mRNA"/>
</dbReference>
<dbReference type="CCDS" id="CCDS12632.1"/>
<dbReference type="PIR" id="A42177">
    <property type="entry name" value="A42177"/>
</dbReference>
<dbReference type="PIR" id="I37973">
    <property type="entry name" value="I37973"/>
</dbReference>
<dbReference type="RefSeq" id="NP_003416.1">
    <property type="nucleotide sequence ID" value="NM_003425.4"/>
</dbReference>
<dbReference type="RefSeq" id="XP_011525569.1">
    <property type="nucleotide sequence ID" value="XM_011527267.2"/>
</dbReference>
<dbReference type="RefSeq" id="XP_011525571.1">
    <property type="nucleotide sequence ID" value="XM_011527269.2"/>
</dbReference>
<dbReference type="RefSeq" id="XP_011525573.1">
    <property type="nucleotide sequence ID" value="XM_011527271.2"/>
</dbReference>
<dbReference type="RefSeq" id="XP_011525575.1">
    <property type="nucleotide sequence ID" value="XM_011527273.2"/>
</dbReference>
<dbReference type="RefSeq" id="XP_016882706.1">
    <property type="nucleotide sequence ID" value="XM_017027217.2"/>
</dbReference>
<dbReference type="RefSeq" id="XP_016882707.1">
    <property type="nucleotide sequence ID" value="XM_017027218.2"/>
</dbReference>
<dbReference type="RefSeq" id="XP_016882708.1">
    <property type="nucleotide sequence ID" value="XM_017027219.1"/>
</dbReference>
<dbReference type="RefSeq" id="XP_016882709.1">
    <property type="nucleotide sequence ID" value="XM_017027220.3"/>
</dbReference>
<dbReference type="RefSeq" id="XP_016882710.1">
    <property type="nucleotide sequence ID" value="XM_017027221.1"/>
</dbReference>
<dbReference type="RefSeq" id="XP_016882711.1">
    <property type="nucleotide sequence ID" value="XM_017027222.2"/>
</dbReference>
<dbReference type="RefSeq" id="XP_016882712.1">
    <property type="nucleotide sequence ID" value="XM_017027223.1"/>
</dbReference>
<dbReference type="RefSeq" id="XP_016882713.1">
    <property type="nucleotide sequence ID" value="XM_017027224.3"/>
</dbReference>
<dbReference type="RefSeq" id="XP_016882714.1">
    <property type="nucleotide sequence ID" value="XM_017027225.3"/>
</dbReference>
<dbReference type="RefSeq" id="XP_016882715.1">
    <property type="nucleotide sequence ID" value="XM_017027226.3"/>
</dbReference>
<dbReference type="RefSeq" id="XP_016882716.1">
    <property type="nucleotide sequence ID" value="XM_017027227.3"/>
</dbReference>
<dbReference type="RefSeq" id="XP_047295273.1">
    <property type="nucleotide sequence ID" value="XM_047439317.1"/>
</dbReference>
<dbReference type="RefSeq" id="XP_047295274.1">
    <property type="nucleotide sequence ID" value="XM_047439318.1"/>
</dbReference>
<dbReference type="RefSeq" id="XP_047295275.1">
    <property type="nucleotide sequence ID" value="XM_047439319.1"/>
</dbReference>
<dbReference type="RefSeq" id="XP_047295276.1">
    <property type="nucleotide sequence ID" value="XM_047439320.1"/>
</dbReference>
<dbReference type="RefSeq" id="XP_047295277.1">
    <property type="nucleotide sequence ID" value="XM_047439321.1"/>
</dbReference>
<dbReference type="RefSeq" id="XP_047295278.1">
    <property type="nucleotide sequence ID" value="XM_047439322.1"/>
</dbReference>
<dbReference type="RefSeq" id="XP_047295279.1">
    <property type="nucleotide sequence ID" value="XM_047439323.1"/>
</dbReference>
<dbReference type="RefSeq" id="XP_047295280.1">
    <property type="nucleotide sequence ID" value="XM_047439324.1"/>
</dbReference>
<dbReference type="RefSeq" id="XP_047295281.1">
    <property type="nucleotide sequence ID" value="XM_047439325.1"/>
</dbReference>
<dbReference type="RefSeq" id="XP_047295282.1">
    <property type="nucleotide sequence ID" value="XM_047439326.1"/>
</dbReference>
<dbReference type="RefSeq" id="XP_047295283.1">
    <property type="nucleotide sequence ID" value="XM_047439327.1"/>
</dbReference>
<dbReference type="RefSeq" id="XP_047295284.1">
    <property type="nucleotide sequence ID" value="XM_047439328.1"/>
</dbReference>
<dbReference type="RefSeq" id="XP_047295285.1">
    <property type="nucleotide sequence ID" value="XM_047439329.1"/>
</dbReference>
<dbReference type="RefSeq" id="XP_047295286.1">
    <property type="nucleotide sequence ID" value="XM_047439330.1"/>
</dbReference>
<dbReference type="RefSeq" id="XP_047295287.1">
    <property type="nucleotide sequence ID" value="XM_047439331.1"/>
</dbReference>
<dbReference type="RefSeq" id="XP_047295288.1">
    <property type="nucleotide sequence ID" value="XM_047439332.1"/>
</dbReference>
<dbReference type="RefSeq" id="XP_047295289.1">
    <property type="nucleotide sequence ID" value="XM_047439333.1"/>
</dbReference>
<dbReference type="RefSeq" id="XP_047295290.1">
    <property type="nucleotide sequence ID" value="XM_047439334.1"/>
</dbReference>
<dbReference type="RefSeq" id="XP_047295291.1">
    <property type="nucleotide sequence ID" value="XM_047439335.1"/>
</dbReference>
<dbReference type="RefSeq" id="XP_047295292.1">
    <property type="nucleotide sequence ID" value="XM_047439336.1"/>
</dbReference>
<dbReference type="RefSeq" id="XP_047295293.1">
    <property type="nucleotide sequence ID" value="XM_047439337.1"/>
</dbReference>
<dbReference type="RefSeq" id="XP_047295294.1">
    <property type="nucleotide sequence ID" value="XM_047439338.1"/>
</dbReference>
<dbReference type="RefSeq" id="XP_047295295.1">
    <property type="nucleotide sequence ID" value="XM_047439339.1"/>
</dbReference>
<dbReference type="RefSeq" id="XP_047295296.1">
    <property type="nucleotide sequence ID" value="XM_047439340.1"/>
</dbReference>
<dbReference type="RefSeq" id="XP_047295297.1">
    <property type="nucleotide sequence ID" value="XM_047439341.1"/>
</dbReference>
<dbReference type="RefSeq" id="XP_047295298.1">
    <property type="nucleotide sequence ID" value="XM_047439342.1"/>
</dbReference>
<dbReference type="RefSeq" id="XP_047295299.1">
    <property type="nucleotide sequence ID" value="XM_047439343.1"/>
</dbReference>
<dbReference type="RefSeq" id="XP_047295300.1">
    <property type="nucleotide sequence ID" value="XM_047439344.1"/>
</dbReference>
<dbReference type="RefSeq" id="XP_047295301.1">
    <property type="nucleotide sequence ID" value="XM_047439345.1"/>
</dbReference>
<dbReference type="RefSeq" id="XP_047295302.1">
    <property type="nucleotide sequence ID" value="XM_047439346.1"/>
</dbReference>
<dbReference type="RefSeq" id="XP_047295303.1">
    <property type="nucleotide sequence ID" value="XM_047439347.1"/>
</dbReference>
<dbReference type="RefSeq" id="XP_047295304.1">
    <property type="nucleotide sequence ID" value="XM_047439348.1"/>
</dbReference>
<dbReference type="RefSeq" id="XP_054177938.1">
    <property type="nucleotide sequence ID" value="XM_054321963.1"/>
</dbReference>
<dbReference type="RefSeq" id="XP_054177939.1">
    <property type="nucleotide sequence ID" value="XM_054321964.1"/>
</dbReference>
<dbReference type="RefSeq" id="XP_054177940.1">
    <property type="nucleotide sequence ID" value="XM_054321965.1"/>
</dbReference>
<dbReference type="RefSeq" id="XP_054177941.1">
    <property type="nucleotide sequence ID" value="XM_054321966.1"/>
</dbReference>
<dbReference type="RefSeq" id="XP_054177942.1">
    <property type="nucleotide sequence ID" value="XM_054321967.1"/>
</dbReference>
<dbReference type="RefSeq" id="XP_054177943.1">
    <property type="nucleotide sequence ID" value="XM_054321968.1"/>
</dbReference>
<dbReference type="RefSeq" id="XP_054177944.1">
    <property type="nucleotide sequence ID" value="XM_054321969.1"/>
</dbReference>
<dbReference type="RefSeq" id="XP_054177945.1">
    <property type="nucleotide sequence ID" value="XM_054321970.1"/>
</dbReference>
<dbReference type="RefSeq" id="XP_054177946.1">
    <property type="nucleotide sequence ID" value="XM_054321971.1"/>
</dbReference>
<dbReference type="RefSeq" id="XP_054177947.1">
    <property type="nucleotide sequence ID" value="XM_054321972.1"/>
</dbReference>
<dbReference type="RefSeq" id="XP_054177948.1">
    <property type="nucleotide sequence ID" value="XM_054321973.1"/>
</dbReference>
<dbReference type="RefSeq" id="XP_054177949.1">
    <property type="nucleotide sequence ID" value="XM_054321974.1"/>
</dbReference>
<dbReference type="RefSeq" id="XP_054177950.1">
    <property type="nucleotide sequence ID" value="XM_054321975.1"/>
</dbReference>
<dbReference type="RefSeq" id="XP_054177951.1">
    <property type="nucleotide sequence ID" value="XM_054321976.1"/>
</dbReference>
<dbReference type="RefSeq" id="XP_054177952.1">
    <property type="nucleotide sequence ID" value="XM_054321977.1"/>
</dbReference>
<dbReference type="RefSeq" id="XP_054177953.1">
    <property type="nucleotide sequence ID" value="XM_054321978.1"/>
</dbReference>
<dbReference type="RefSeq" id="XP_054177954.1">
    <property type="nucleotide sequence ID" value="XM_054321979.1"/>
</dbReference>
<dbReference type="RefSeq" id="XP_054177955.1">
    <property type="nucleotide sequence ID" value="XM_054321980.1"/>
</dbReference>
<dbReference type="SMR" id="Q02386"/>
<dbReference type="BioGRID" id="113421">
    <property type="interactions" value="10"/>
</dbReference>
<dbReference type="FunCoup" id="Q02386">
    <property type="interactions" value="402"/>
</dbReference>
<dbReference type="IntAct" id="Q02386">
    <property type="interactions" value="21"/>
</dbReference>
<dbReference type="STRING" id="9606.ENSP00000269973"/>
<dbReference type="GlyGen" id="Q02386">
    <property type="glycosylation" value="1 site, 1 O-linked glycan (1 site)"/>
</dbReference>
<dbReference type="iPTMnet" id="Q02386"/>
<dbReference type="PhosphoSitePlus" id="Q02386"/>
<dbReference type="BioMuta" id="ZNF45"/>
<dbReference type="DMDM" id="2507555"/>
<dbReference type="jPOST" id="Q02386"/>
<dbReference type="MassIVE" id="Q02386"/>
<dbReference type="PaxDb" id="9606-ENSP00000269973"/>
<dbReference type="PeptideAtlas" id="Q02386"/>
<dbReference type="ProteomicsDB" id="58085"/>
<dbReference type="Antibodypedia" id="31139">
    <property type="antibodies" value="48 antibodies from 16 providers"/>
</dbReference>
<dbReference type="DNASU" id="7596"/>
<dbReference type="Ensembl" id="ENST00000269973.10">
    <property type="protein sequence ID" value="ENSP00000269973.4"/>
    <property type="gene ID" value="ENSG00000124459.12"/>
</dbReference>
<dbReference type="Ensembl" id="ENST00000589703.5">
    <property type="protein sequence ID" value="ENSP00000468579.1"/>
    <property type="gene ID" value="ENSG00000124459.12"/>
</dbReference>
<dbReference type="Ensembl" id="ENST00000615985.4">
    <property type="protein sequence ID" value="ENSP00000481895.1"/>
    <property type="gene ID" value="ENSG00000124459.12"/>
</dbReference>
<dbReference type="GeneID" id="7596"/>
<dbReference type="KEGG" id="hsa:7596"/>
<dbReference type="MANE-Select" id="ENST00000269973.10">
    <property type="protein sequence ID" value="ENSP00000269973.4"/>
    <property type="RefSeq nucleotide sequence ID" value="NM_003425.4"/>
    <property type="RefSeq protein sequence ID" value="NP_003416.1"/>
</dbReference>
<dbReference type="UCSC" id="uc002oxu.3">
    <property type="organism name" value="human"/>
</dbReference>
<dbReference type="AGR" id="HGNC:13111"/>
<dbReference type="CTD" id="7596"/>
<dbReference type="DisGeNET" id="7596"/>
<dbReference type="GeneCards" id="ZNF45"/>
<dbReference type="HGNC" id="HGNC:13111">
    <property type="gene designation" value="ZNF45"/>
</dbReference>
<dbReference type="HPA" id="ENSG00000124459">
    <property type="expression patterns" value="Low tissue specificity"/>
</dbReference>
<dbReference type="MIM" id="194554">
    <property type="type" value="gene"/>
</dbReference>
<dbReference type="neXtProt" id="NX_Q02386"/>
<dbReference type="OpenTargets" id="ENSG00000124459"/>
<dbReference type="PharmGKB" id="PA37686"/>
<dbReference type="VEuPathDB" id="HostDB:ENSG00000124459"/>
<dbReference type="eggNOG" id="KOG1721">
    <property type="taxonomic scope" value="Eukaryota"/>
</dbReference>
<dbReference type="GeneTree" id="ENSGT00940000162545"/>
<dbReference type="HOGENOM" id="CLU_002678_31_6_1"/>
<dbReference type="InParanoid" id="Q02386"/>
<dbReference type="OMA" id="CDNTFRR"/>
<dbReference type="OrthoDB" id="9411774at2759"/>
<dbReference type="PAN-GO" id="Q02386">
    <property type="GO annotations" value="4 GO annotations based on evolutionary models"/>
</dbReference>
<dbReference type="PhylomeDB" id="Q02386"/>
<dbReference type="TreeFam" id="TF350845"/>
<dbReference type="PathwayCommons" id="Q02386"/>
<dbReference type="Reactome" id="R-HSA-212436">
    <property type="pathway name" value="Generic Transcription Pathway"/>
</dbReference>
<dbReference type="SignaLink" id="Q02386"/>
<dbReference type="BioGRID-ORCS" id="7596">
    <property type="hits" value="14 hits in 1178 CRISPR screens"/>
</dbReference>
<dbReference type="ChiTaRS" id="ZNF45">
    <property type="organism name" value="human"/>
</dbReference>
<dbReference type="GenomeRNAi" id="7596"/>
<dbReference type="Pharos" id="Q02386">
    <property type="development level" value="Tdark"/>
</dbReference>
<dbReference type="PRO" id="PR:Q02386"/>
<dbReference type="Proteomes" id="UP000005640">
    <property type="component" value="Chromosome 19"/>
</dbReference>
<dbReference type="RNAct" id="Q02386">
    <property type="molecule type" value="protein"/>
</dbReference>
<dbReference type="Bgee" id="ENSG00000124459">
    <property type="expression patterns" value="Expressed in germinal epithelium of ovary and 181 other cell types or tissues"/>
</dbReference>
<dbReference type="ExpressionAtlas" id="Q02386">
    <property type="expression patterns" value="baseline and differential"/>
</dbReference>
<dbReference type="GO" id="GO:0005654">
    <property type="term" value="C:nucleoplasm"/>
    <property type="evidence" value="ECO:0000314"/>
    <property type="project" value="HPA"/>
</dbReference>
<dbReference type="GO" id="GO:0003677">
    <property type="term" value="F:DNA binding"/>
    <property type="evidence" value="ECO:0007669"/>
    <property type="project" value="UniProtKB-KW"/>
</dbReference>
<dbReference type="GO" id="GO:0003700">
    <property type="term" value="F:DNA-binding transcription factor activity"/>
    <property type="evidence" value="ECO:0000303"/>
    <property type="project" value="ARUK-UCL"/>
</dbReference>
<dbReference type="GO" id="GO:0008270">
    <property type="term" value="F:zinc ion binding"/>
    <property type="evidence" value="ECO:0007669"/>
    <property type="project" value="UniProtKB-KW"/>
</dbReference>
<dbReference type="CDD" id="cd07765">
    <property type="entry name" value="KRAB_A-box"/>
    <property type="match status" value="1"/>
</dbReference>
<dbReference type="FunFam" id="3.30.160.60:FF:004784">
    <property type="match status" value="1"/>
</dbReference>
<dbReference type="FunFam" id="3.30.160.60:FF:001661">
    <property type="entry name" value="Zinc finger and SCAN domain-containing 26"/>
    <property type="match status" value="1"/>
</dbReference>
<dbReference type="FunFam" id="3.30.160.60:FF:001394">
    <property type="entry name" value="Zinc finger protein 189"/>
    <property type="match status" value="1"/>
</dbReference>
<dbReference type="FunFam" id="3.30.160.60:FF:000913">
    <property type="entry name" value="zinc finger protein 235 isoform X1"/>
    <property type="match status" value="2"/>
</dbReference>
<dbReference type="FunFam" id="3.30.160.60:FF:002153">
    <property type="entry name" value="Zinc finger protein 30"/>
    <property type="match status" value="1"/>
</dbReference>
<dbReference type="FunFam" id="3.30.160.60:FF:000016">
    <property type="entry name" value="zinc finger protein 37 homolog"/>
    <property type="match status" value="1"/>
</dbReference>
<dbReference type="FunFam" id="3.30.160.60:FF:000663">
    <property type="entry name" value="Zinc finger protein 45"/>
    <property type="match status" value="3"/>
</dbReference>
<dbReference type="FunFam" id="3.30.160.60:FF:001980">
    <property type="entry name" value="Zinc finger protein 45"/>
    <property type="match status" value="2"/>
</dbReference>
<dbReference type="FunFam" id="3.30.160.60:FF:002605">
    <property type="entry name" value="Zinc finger protein 45"/>
    <property type="match status" value="1"/>
</dbReference>
<dbReference type="FunFam" id="3.30.160.60:FF:000176">
    <property type="entry name" value="zinc finger protein 70"/>
    <property type="match status" value="1"/>
</dbReference>
<dbReference type="FunFam" id="3.30.160.60:FF:002357">
    <property type="entry name" value="Zinc finger protein 782"/>
    <property type="match status" value="1"/>
</dbReference>
<dbReference type="FunFam" id="3.30.160.60:FF:000028">
    <property type="entry name" value="zinc finger protein 90 homolog"/>
    <property type="match status" value="1"/>
</dbReference>
<dbReference type="Gene3D" id="6.10.140.140">
    <property type="match status" value="1"/>
</dbReference>
<dbReference type="Gene3D" id="3.30.160.60">
    <property type="entry name" value="Classic Zinc Finger"/>
    <property type="match status" value="17"/>
</dbReference>
<dbReference type="InterPro" id="IPR050589">
    <property type="entry name" value="Ikaros_C2H2-ZF"/>
</dbReference>
<dbReference type="InterPro" id="IPR001909">
    <property type="entry name" value="KRAB"/>
</dbReference>
<dbReference type="InterPro" id="IPR036051">
    <property type="entry name" value="KRAB_dom_sf"/>
</dbReference>
<dbReference type="InterPro" id="IPR036236">
    <property type="entry name" value="Znf_C2H2_sf"/>
</dbReference>
<dbReference type="InterPro" id="IPR013087">
    <property type="entry name" value="Znf_C2H2_type"/>
</dbReference>
<dbReference type="PANTHER" id="PTHR24404">
    <property type="entry name" value="ZINC FINGER PROTEIN"/>
    <property type="match status" value="1"/>
</dbReference>
<dbReference type="PANTHER" id="PTHR24404:SF100">
    <property type="entry name" value="ZINC FINGER PROTEIN 501"/>
    <property type="match status" value="1"/>
</dbReference>
<dbReference type="Pfam" id="PF01352">
    <property type="entry name" value="KRAB"/>
    <property type="match status" value="1"/>
</dbReference>
<dbReference type="Pfam" id="PF00096">
    <property type="entry name" value="zf-C2H2"/>
    <property type="match status" value="15"/>
</dbReference>
<dbReference type="SMART" id="SM00349">
    <property type="entry name" value="KRAB"/>
    <property type="match status" value="1"/>
</dbReference>
<dbReference type="SMART" id="SM00355">
    <property type="entry name" value="ZnF_C2H2"/>
    <property type="match status" value="15"/>
</dbReference>
<dbReference type="SUPFAM" id="SSF57667">
    <property type="entry name" value="beta-beta-alpha zinc fingers"/>
    <property type="match status" value="10"/>
</dbReference>
<dbReference type="SUPFAM" id="SSF109640">
    <property type="entry name" value="KRAB domain (Kruppel-associated box)"/>
    <property type="match status" value="1"/>
</dbReference>
<dbReference type="PROSITE" id="PS50805">
    <property type="entry name" value="KRAB"/>
    <property type="match status" value="1"/>
</dbReference>
<dbReference type="PROSITE" id="PS00028">
    <property type="entry name" value="ZINC_FINGER_C2H2_1"/>
    <property type="match status" value="15"/>
</dbReference>
<dbReference type="PROSITE" id="PS50157">
    <property type="entry name" value="ZINC_FINGER_C2H2_2"/>
    <property type="match status" value="18"/>
</dbReference>
<name>ZNF45_HUMAN</name>